<dbReference type="EC" id="3.2.1.46" evidence="5"/>
<dbReference type="EMBL" id="U87477">
    <property type="protein sequence ID" value="AAB58575.1"/>
    <property type="status" value="ALT_INIT"/>
    <property type="molecule type" value="Genomic_DNA"/>
</dbReference>
<dbReference type="EMBL" id="U87462">
    <property type="protein sequence ID" value="AAB58575.1"/>
    <property type="status" value="JOINED"/>
    <property type="molecule type" value="Genomic_DNA"/>
</dbReference>
<dbReference type="EMBL" id="U87463">
    <property type="protein sequence ID" value="AAB58575.1"/>
    <property type="status" value="JOINED"/>
    <property type="molecule type" value="Genomic_DNA"/>
</dbReference>
<dbReference type="EMBL" id="U87464">
    <property type="protein sequence ID" value="AAB58575.1"/>
    <property type="status" value="JOINED"/>
    <property type="molecule type" value="Genomic_DNA"/>
</dbReference>
<dbReference type="EMBL" id="U87465">
    <property type="protein sequence ID" value="AAB58575.1"/>
    <property type="status" value="JOINED"/>
    <property type="molecule type" value="Genomic_DNA"/>
</dbReference>
<dbReference type="EMBL" id="U87466">
    <property type="protein sequence ID" value="AAB58575.1"/>
    <property type="status" value="JOINED"/>
    <property type="molecule type" value="Genomic_DNA"/>
</dbReference>
<dbReference type="EMBL" id="U87467">
    <property type="protein sequence ID" value="AAB58575.1"/>
    <property type="status" value="JOINED"/>
    <property type="molecule type" value="Genomic_DNA"/>
</dbReference>
<dbReference type="EMBL" id="U87468">
    <property type="protein sequence ID" value="AAB58575.1"/>
    <property type="status" value="JOINED"/>
    <property type="molecule type" value="Genomic_DNA"/>
</dbReference>
<dbReference type="EMBL" id="U87469">
    <property type="protein sequence ID" value="AAB58575.1"/>
    <property type="status" value="JOINED"/>
    <property type="molecule type" value="Genomic_DNA"/>
</dbReference>
<dbReference type="EMBL" id="U87470">
    <property type="protein sequence ID" value="AAB58575.1"/>
    <property type="status" value="JOINED"/>
    <property type="molecule type" value="Genomic_DNA"/>
</dbReference>
<dbReference type="EMBL" id="U87471">
    <property type="protein sequence ID" value="AAB58575.1"/>
    <property type="status" value="JOINED"/>
    <property type="molecule type" value="Genomic_DNA"/>
</dbReference>
<dbReference type="EMBL" id="U87472">
    <property type="protein sequence ID" value="AAB58575.1"/>
    <property type="status" value="JOINED"/>
    <property type="molecule type" value="Genomic_DNA"/>
</dbReference>
<dbReference type="EMBL" id="U87473">
    <property type="protein sequence ID" value="AAB58575.1"/>
    <property type="status" value="JOINED"/>
    <property type="molecule type" value="Genomic_DNA"/>
</dbReference>
<dbReference type="EMBL" id="U87474">
    <property type="protein sequence ID" value="AAB58575.1"/>
    <property type="status" value="JOINED"/>
    <property type="molecule type" value="Genomic_DNA"/>
</dbReference>
<dbReference type="EMBL" id="U87475">
    <property type="protein sequence ID" value="AAB58575.1"/>
    <property type="status" value="JOINED"/>
    <property type="molecule type" value="Genomic_DNA"/>
</dbReference>
<dbReference type="EMBL" id="U87476">
    <property type="protein sequence ID" value="AAB58575.1"/>
    <property type="status" value="JOINED"/>
    <property type="molecule type" value="Genomic_DNA"/>
</dbReference>
<dbReference type="EMBL" id="U87628">
    <property type="protein sequence ID" value="AAB58576.1"/>
    <property type="molecule type" value="mRNA"/>
</dbReference>
<dbReference type="EMBL" id="AB172678">
    <property type="status" value="NOT_ANNOTATED_CDS"/>
    <property type="molecule type" value="mRNA"/>
</dbReference>
<dbReference type="RefSeq" id="NP_001037727.1">
    <property type="nucleotide sequence ID" value="NM_001044262.2"/>
</dbReference>
<dbReference type="SMR" id="O02791"/>
<dbReference type="FunCoup" id="O02791">
    <property type="interactions" value="401"/>
</dbReference>
<dbReference type="STRING" id="9544.ENSMMUP00000051400"/>
<dbReference type="CAZy" id="GH59">
    <property type="family name" value="Glycoside Hydrolase Family 59"/>
</dbReference>
<dbReference type="GlyCosmos" id="O02791">
    <property type="glycosylation" value="7 sites, No reported glycans"/>
</dbReference>
<dbReference type="PaxDb" id="9544-ENSMMUP00000022713"/>
<dbReference type="Ensembl" id="ENSMMUT00000060256.2">
    <property type="protein sequence ID" value="ENSMMUP00000051400.1"/>
    <property type="gene ID" value="ENSMMUG00000017261.4"/>
</dbReference>
<dbReference type="GeneID" id="693322"/>
<dbReference type="KEGG" id="mcc:693322"/>
<dbReference type="CTD" id="2581"/>
<dbReference type="VEuPathDB" id="HostDB:ENSMMUG00000017261"/>
<dbReference type="VGNC" id="VGNC:72867">
    <property type="gene designation" value="GALC"/>
</dbReference>
<dbReference type="eggNOG" id="ENOG502QQ1Q">
    <property type="taxonomic scope" value="Eukaryota"/>
</dbReference>
<dbReference type="GeneTree" id="ENSGT00390000003303"/>
<dbReference type="HOGENOM" id="CLU_015456_2_0_1"/>
<dbReference type="InParanoid" id="O02791"/>
<dbReference type="OMA" id="KYPKNGW"/>
<dbReference type="OrthoDB" id="440760at2759"/>
<dbReference type="TreeFam" id="TF312985"/>
<dbReference type="BRENDA" id="3.2.1.46">
    <property type="organism ID" value="3126"/>
</dbReference>
<dbReference type="Proteomes" id="UP000006718">
    <property type="component" value="Chromosome 7"/>
</dbReference>
<dbReference type="Bgee" id="ENSMMUG00000017261">
    <property type="expression patterns" value="Expressed in spermatid and 22 other cell types or tissues"/>
</dbReference>
<dbReference type="ExpressionAtlas" id="O02791">
    <property type="expression patterns" value="baseline"/>
</dbReference>
<dbReference type="GO" id="GO:0005764">
    <property type="term" value="C:lysosome"/>
    <property type="evidence" value="ECO:0000318"/>
    <property type="project" value="GO_Central"/>
</dbReference>
<dbReference type="GO" id="GO:0016020">
    <property type="term" value="C:membrane"/>
    <property type="evidence" value="ECO:0007669"/>
    <property type="project" value="GOC"/>
</dbReference>
<dbReference type="GO" id="GO:0004336">
    <property type="term" value="F:galactosylceramidase activity"/>
    <property type="evidence" value="ECO:0000250"/>
    <property type="project" value="UniProtKB"/>
</dbReference>
<dbReference type="GO" id="GO:0006683">
    <property type="term" value="P:galactosylceramide catabolic process"/>
    <property type="evidence" value="ECO:0000250"/>
    <property type="project" value="UniProtKB"/>
</dbReference>
<dbReference type="GO" id="GO:0042552">
    <property type="term" value="P:myelination"/>
    <property type="evidence" value="ECO:0007669"/>
    <property type="project" value="Ensembl"/>
</dbReference>
<dbReference type="FunFam" id="2.60.120.560:FF:000001">
    <property type="entry name" value="galactocerebrosidase precursor"/>
    <property type="match status" value="1"/>
</dbReference>
<dbReference type="FunFam" id="3.20.20.70:FF:000091">
    <property type="entry name" value="galactocerebrosidase precursor"/>
    <property type="match status" value="1"/>
</dbReference>
<dbReference type="FunFam" id="3.20.20.80:FF:000026">
    <property type="entry name" value="galactocerebrosidase precursor"/>
    <property type="match status" value="1"/>
</dbReference>
<dbReference type="Gene3D" id="3.20.20.70">
    <property type="entry name" value="Aldolase class I"/>
    <property type="match status" value="1"/>
</dbReference>
<dbReference type="Gene3D" id="2.60.120.560">
    <property type="entry name" value="Exo-inulinase, domain 1"/>
    <property type="match status" value="1"/>
</dbReference>
<dbReference type="Gene3D" id="3.20.20.80">
    <property type="entry name" value="Glycosidases"/>
    <property type="match status" value="1"/>
</dbReference>
<dbReference type="InterPro" id="IPR013785">
    <property type="entry name" value="Aldolase_TIM"/>
</dbReference>
<dbReference type="InterPro" id="IPR049162">
    <property type="entry name" value="GH59_C"/>
</dbReference>
<dbReference type="InterPro" id="IPR049161">
    <property type="entry name" value="GH59_cat"/>
</dbReference>
<dbReference type="InterPro" id="IPR001286">
    <property type="entry name" value="Glyco_hydro_59"/>
</dbReference>
<dbReference type="InterPro" id="IPR035394">
    <property type="entry name" value="Glyco_hydro_59_dom"/>
</dbReference>
<dbReference type="InterPro" id="IPR017853">
    <property type="entry name" value="Glycoside_hydrolase_SF"/>
</dbReference>
<dbReference type="PANTHER" id="PTHR15172">
    <property type="entry name" value="GALACTOCEREBROSIDASE"/>
    <property type="match status" value="1"/>
</dbReference>
<dbReference type="PANTHER" id="PTHR15172:SF1">
    <property type="entry name" value="GALACTOCEREBROSIDASE"/>
    <property type="match status" value="1"/>
</dbReference>
<dbReference type="Pfam" id="PF02057">
    <property type="entry name" value="Glyco_hydro_59"/>
    <property type="match status" value="1"/>
</dbReference>
<dbReference type="Pfam" id="PF21708">
    <property type="entry name" value="Glyco_hydro_59_C"/>
    <property type="match status" value="1"/>
</dbReference>
<dbReference type="Pfam" id="PF17387">
    <property type="entry name" value="Glyco_hydro_59M"/>
    <property type="match status" value="1"/>
</dbReference>
<dbReference type="PRINTS" id="PR00850">
    <property type="entry name" value="GLHYDRLASE59"/>
</dbReference>
<dbReference type="SUPFAM" id="SSF51445">
    <property type="entry name" value="(Trans)glycosidases"/>
    <property type="match status" value="1"/>
</dbReference>
<name>GALC_MACMU</name>
<protein>
    <recommendedName>
        <fullName evidence="2">Galactocerebrosidase</fullName>
        <shortName>GALCERase</shortName>
        <ecNumber evidence="5">3.2.1.46</ecNumber>
    </recommendedName>
    <alternativeName>
        <fullName>Galactocerebroside beta-galactosidase</fullName>
    </alternativeName>
    <alternativeName>
        <fullName evidence="2">Galactosylceramidase</fullName>
    </alternativeName>
    <alternativeName>
        <fullName>Galactosylceramide beta-galactosidase</fullName>
    </alternativeName>
</protein>
<sequence>MAEWLLSASRQRRVKAMTAAAGSAGRAAVPFLLCALLAPGGAYVLDDSDGLGREFDGIGAVSGGGATSRLLVNYPEPYRSQILDYLFKPNFGASLHILKVEIGGDGQTTDGTEPSHMHYALDENYFRGYEWWLMKEAKKRNPNITLIGLPWSFPGWLGKGFDWPYVNLQLTAYYVVTWIVGAKRYHDLDIDYIGIWNERSYNANYIKILRKMLNSQGLQRVKIIASDNLWESISAAMLLDAELFKVVDVIGAHYPGTHSVKDARLTGKKLWSSEDFSTLNSDTGAGCWGRILNQNYVNGYMTSTIAWNLVASYYEQLPYGRCGLMTAQEPWSGHYVVESPVWVSAHTTQFTQPGWYYLKTVGHLEKGGSYVALTDGLGNLTIIIETMSHKHSKCIRPFLPYFNVSQQFATFVLKGSFSEIPELQVWYTKLGKTSERFLFKQLDSLWLLDSNGSFTLKLQEDELFTLTTLTTGRKGSYLPPPKSQRFPSTYKDDFNVDYPFFSEAPNFADQTGVFEYFTNMEDPGEHHFTLRQVLNQRPITWAADASNTISIIGDYNWTNLTIKCDVYIETPDTGGVFIAGRVNKGGILIRSARGIFFWIFANGSYRVTGDLAGWIIYALGHVEVTAKTWYTLTLTIKGRFASGMLNDKSLWTDIPVNFPKNGWAAIGTHSFEFAQFDNFHVEATR</sequence>
<comment type="function">
    <text evidence="2 5">Hydrolyzes the galactose ester bonds of glycolipids such as galactosylceramide and galactosylsphingosine (PubMed:9192853). Enzyme with very low activity responsible for the lysosomal catabolism of galactosylceramide, a major lipid in myelin, kidney and epithelial cells of small intestine and colon (By similarity).</text>
</comment>
<comment type="catalytic activity">
    <reaction evidence="5">
        <text>a beta-D-galactosyl-(1&lt;-&gt;1')-N-acylsphing-4-enine + H2O = an N-acylsphing-4-enine + D-galactose</text>
        <dbReference type="Rhea" id="RHEA:14297"/>
        <dbReference type="ChEBI" id="CHEBI:4139"/>
        <dbReference type="ChEBI" id="CHEBI:15377"/>
        <dbReference type="ChEBI" id="CHEBI:18390"/>
        <dbReference type="ChEBI" id="CHEBI:52639"/>
        <dbReference type="EC" id="3.2.1.46"/>
    </reaction>
    <physiologicalReaction direction="left-to-right" evidence="7">
        <dbReference type="Rhea" id="RHEA:14298"/>
    </physiologicalReaction>
</comment>
<comment type="catalytic activity">
    <reaction evidence="2">
        <text>beta-D-galactosyl-(1&lt;-&gt;1)-sphing-4-enine + H2O = sphing-4-enine + D-galactose</text>
        <dbReference type="Rhea" id="RHEA:43908"/>
        <dbReference type="ChEBI" id="CHEBI:4139"/>
        <dbReference type="ChEBI" id="CHEBI:15377"/>
        <dbReference type="ChEBI" id="CHEBI:57756"/>
        <dbReference type="ChEBI" id="CHEBI:57934"/>
    </reaction>
    <physiologicalReaction direction="left-to-right" evidence="2">
        <dbReference type="Rhea" id="RHEA:43909"/>
    </physiologicalReaction>
</comment>
<comment type="catalytic activity">
    <reaction evidence="3">
        <text>a D-galactosylceramide + H2O = an N-acyl-sphingoid base + D-galactose</text>
        <dbReference type="Rhea" id="RHEA:43412"/>
        <dbReference type="ChEBI" id="CHEBI:4139"/>
        <dbReference type="ChEBI" id="CHEBI:15377"/>
        <dbReference type="ChEBI" id="CHEBI:36498"/>
        <dbReference type="ChEBI" id="CHEBI:83273"/>
    </reaction>
    <physiologicalReaction direction="left-to-right" evidence="3">
        <dbReference type="Rhea" id="RHEA:43413"/>
    </physiologicalReaction>
</comment>
<comment type="subcellular location">
    <subcellularLocation>
        <location evidence="1">Lysosome</location>
    </subcellularLocation>
</comment>
<comment type="disease">
    <text>Defects in GALC are the cause of globoid cell leukodystrophy (GLD); also known as Krabbe disease. This deficiency results in the insufficient catabolism of several galactolipids that are important in the production of normal myelin.</text>
</comment>
<comment type="similarity">
    <text evidence="6">Belongs to the glycosyl hydrolase 59 family.</text>
</comment>
<comment type="caution">
    <text evidence="6">It is uncertain whether Met-1 or Met-17 is the initiator.</text>
</comment>
<comment type="sequence caution" evidence="6">
    <conflict type="erroneous initiation">
        <sequence resource="EMBL-CDS" id="AAB58575"/>
    </conflict>
</comment>
<reference key="1">
    <citation type="journal article" date="1997" name="Genomics">
        <title>Characterization of the rhesus monkey galactocerebrosidase (GALC) cDNA and gene and identification of the mutation causing globoid cell leukodystrophy (Krabbe disease) in this primate.</title>
        <authorList>
            <person name="Luzi P."/>
            <person name="Rafi M.A."/>
            <person name="Victoria T."/>
            <person name="Baskin G.B."/>
            <person name="Wenger D.A."/>
        </authorList>
    </citation>
    <scope>NUCLEOTIDE SEQUENCE [GENOMIC DNA / MRNA]</scope>
    <scope>FUNCTION</scope>
    <scope>CATALYTIC ACTIVITY</scope>
    <scope>ROLE IN DISEASE</scope>
</reference>
<reference key="2">
    <citation type="submission" date="2007-03" db="EMBL/GenBank/DDBJ databases">
        <authorList>
            <person name="Wang H.-Y."/>
            <person name="Chien H.-C."/>
            <person name="Osada N."/>
            <person name="Hashimoto K."/>
            <person name="Sugano S."/>
            <person name="Gojobori T."/>
            <person name="Chou C.-K."/>
            <person name="Tsai S.-F."/>
            <person name="Wu C.-I."/>
            <person name="Shen C.-K.J."/>
        </authorList>
    </citation>
    <scope>NUCLEOTIDE SEQUENCE [LARGE SCALE MRNA] OF 1-223</scope>
</reference>
<proteinExistence type="evidence at protein level"/>
<gene>
    <name evidence="2" type="primary">GALC</name>
</gene>
<organism>
    <name type="scientific">Macaca mulatta</name>
    <name type="common">Rhesus macaque</name>
    <dbReference type="NCBI Taxonomy" id="9544"/>
    <lineage>
        <taxon>Eukaryota</taxon>
        <taxon>Metazoa</taxon>
        <taxon>Chordata</taxon>
        <taxon>Craniata</taxon>
        <taxon>Vertebrata</taxon>
        <taxon>Euteleostomi</taxon>
        <taxon>Mammalia</taxon>
        <taxon>Eutheria</taxon>
        <taxon>Euarchontoglires</taxon>
        <taxon>Primates</taxon>
        <taxon>Haplorrhini</taxon>
        <taxon>Catarrhini</taxon>
        <taxon>Cercopithecidae</taxon>
        <taxon>Cercopithecinae</taxon>
        <taxon>Macaca</taxon>
    </lineage>
</organism>
<feature type="signal peptide" evidence="1">
    <location>
        <begin position="1"/>
        <end position="42"/>
    </location>
</feature>
<feature type="chain" id="PRO_0000012231" description="Galactocerebrosidase">
    <location>
        <begin position="43"/>
        <end position="685"/>
    </location>
</feature>
<feature type="active site" description="Proton donor/acceptor" evidence="1">
    <location>
        <position position="198"/>
    </location>
</feature>
<feature type="active site" description="Nucleophile" evidence="1">
    <location>
        <position position="274"/>
    </location>
</feature>
<feature type="binding site" evidence="1">
    <location>
        <position position="109"/>
    </location>
    <ligand>
        <name>substrate</name>
    </ligand>
</feature>
<feature type="binding site" evidence="1">
    <location>
        <position position="151"/>
    </location>
    <ligand>
        <name>substrate</name>
    </ligand>
</feature>
<feature type="binding site" evidence="1">
    <location>
        <position position="197"/>
    </location>
    <ligand>
        <name>substrate</name>
    </ligand>
</feature>
<feature type="binding site" evidence="1">
    <location>
        <position position="396"/>
    </location>
    <ligand>
        <name>substrate</name>
    </ligand>
</feature>
<feature type="glycosylation site" description="N-linked (GlcNAc...) asparagine" evidence="4">
    <location>
        <position position="143"/>
    </location>
</feature>
<feature type="glycosylation site" description="N-linked (GlcNAc...) asparagine" evidence="4">
    <location>
        <position position="379"/>
    </location>
</feature>
<feature type="glycosylation site" description="N-linked (GlcNAc...) asparagine" evidence="4">
    <location>
        <position position="403"/>
    </location>
</feature>
<feature type="glycosylation site" description="N-linked (GlcNAc...) asparagine" evidence="4">
    <location>
        <position position="451"/>
    </location>
</feature>
<feature type="glycosylation site" description="N-linked (GlcNAc...) asparagine" evidence="4">
    <location>
        <position position="556"/>
    </location>
</feature>
<feature type="glycosylation site" description="N-linked (GlcNAc...) asparagine" evidence="4">
    <location>
        <position position="559"/>
    </location>
</feature>
<feature type="glycosylation site" description="N-linked (GlcNAc...) asparagine" evidence="4">
    <location>
        <position position="602"/>
    </location>
</feature>
<feature type="disulfide bond" evidence="1">
    <location>
        <begin position="287"/>
        <end position="394"/>
    </location>
</feature>
<keyword id="KW-1015">Disulfide bond</keyword>
<keyword id="KW-0325">Glycoprotein</keyword>
<keyword id="KW-0326">Glycosidase</keyword>
<keyword id="KW-0378">Hydrolase</keyword>
<keyword id="KW-0442">Lipid degradation</keyword>
<keyword id="KW-0443">Lipid metabolism</keyword>
<keyword id="KW-0458">Lysosome</keyword>
<keyword id="KW-1185">Reference proteome</keyword>
<keyword id="KW-0732">Signal</keyword>
<keyword id="KW-0746">Sphingolipid metabolism</keyword>
<accession>O02791</accession>
<evidence type="ECO:0000250" key="1"/>
<evidence type="ECO:0000250" key="2">
    <source>
        <dbReference type="UniProtKB" id="P54803"/>
    </source>
</evidence>
<evidence type="ECO:0000250" key="3">
    <source>
        <dbReference type="UniProtKB" id="P54818"/>
    </source>
</evidence>
<evidence type="ECO:0000255" key="4"/>
<evidence type="ECO:0000269" key="5">
    <source>
    </source>
</evidence>
<evidence type="ECO:0000305" key="6"/>
<evidence type="ECO:0000305" key="7">
    <source>
    </source>
</evidence>